<protein>
    <recommendedName>
        <fullName>C-Jun-amino-terminal kinase-interacting protein 4</fullName>
        <shortName>JIP-4</shortName>
        <shortName>JNK-interacting protein 4</shortName>
    </recommendedName>
    <alternativeName>
        <fullName>JNK-associated leucine-zipper protein</fullName>
        <shortName>JLP</shortName>
    </alternativeName>
    <alternativeName>
        <fullName>JNK/SAPK-associated protein 2</fullName>
        <shortName>JSAP2</shortName>
    </alternativeName>
    <alternativeName>
        <fullName>Mitogen-activated protein kinase 8-interacting protein 4</fullName>
    </alternativeName>
    <alternativeName>
        <fullName>Sperm-associated antigen 9</fullName>
    </alternativeName>
</protein>
<gene>
    <name evidence="18" type="primary">Spag9</name>
    <name type="synonym">Jip4</name>
    <name type="synonym">Jsap2</name>
    <name type="synonym">Kiaa0516</name>
    <name type="synonym">Mapk8ip4</name>
</gene>
<feature type="chain" id="PRO_0000234077" description="C-Jun-amino-terminal kinase-interacting protein 4">
    <location>
        <begin position="1"/>
        <end position="1321"/>
    </location>
</feature>
<feature type="domain" description="RH1" evidence="4">
    <location>
        <begin position="7"/>
        <end position="95"/>
    </location>
</feature>
<feature type="domain" description="RH2" evidence="5">
    <location>
        <begin position="500"/>
        <end position="604"/>
    </location>
</feature>
<feature type="region of interest" description="Disordered" evidence="6">
    <location>
        <begin position="203"/>
        <end position="308"/>
    </location>
</feature>
<feature type="region of interest" description="Disordered" evidence="6">
    <location>
        <begin position="322"/>
        <end position="341"/>
    </location>
</feature>
<feature type="region of interest" description="Disordered" evidence="6">
    <location>
        <begin position="473"/>
        <end position="500"/>
    </location>
</feature>
<feature type="region of interest" description="Disordered" evidence="6">
    <location>
        <begin position="563"/>
        <end position="600"/>
    </location>
</feature>
<feature type="region of interest" description="Disordered" evidence="6">
    <location>
        <begin position="853"/>
        <end position="883"/>
    </location>
</feature>
<feature type="region of interest" description="Disordered" evidence="6">
    <location>
        <begin position="1239"/>
        <end position="1267"/>
    </location>
</feature>
<feature type="coiled-coil region" evidence="3">
    <location>
        <begin position="66"/>
        <end position="166"/>
    </location>
</feature>
<feature type="coiled-coil region" evidence="1">
    <location>
        <begin position="408"/>
        <end position="534"/>
    </location>
</feature>
<feature type="coiled-coil region" evidence="3">
    <location>
        <begin position="724"/>
        <end position="758"/>
    </location>
</feature>
<feature type="compositionally biased region" description="Polar residues" evidence="6">
    <location>
        <begin position="236"/>
        <end position="248"/>
    </location>
</feature>
<feature type="compositionally biased region" description="Polar residues" evidence="6">
    <location>
        <begin position="266"/>
        <end position="285"/>
    </location>
</feature>
<feature type="compositionally biased region" description="Polar residues" evidence="6">
    <location>
        <begin position="322"/>
        <end position="332"/>
    </location>
</feature>
<feature type="compositionally biased region" description="Basic and acidic residues" evidence="6">
    <location>
        <begin position="473"/>
        <end position="489"/>
    </location>
</feature>
<feature type="compositionally biased region" description="Polar residues" evidence="6">
    <location>
        <begin position="855"/>
        <end position="864"/>
    </location>
</feature>
<feature type="compositionally biased region" description="Acidic residues" evidence="6">
    <location>
        <begin position="874"/>
        <end position="883"/>
    </location>
</feature>
<feature type="compositionally biased region" description="Polar residues" evidence="6">
    <location>
        <begin position="1255"/>
        <end position="1266"/>
    </location>
</feature>
<feature type="modified residue" description="N-acetylmethionine" evidence="2">
    <location>
        <position position="1"/>
    </location>
</feature>
<feature type="modified residue" description="Phosphoserine" evidence="2">
    <location>
        <position position="109"/>
    </location>
</feature>
<feature type="modified residue" description="Phosphoserine" evidence="2">
    <location>
        <position position="183"/>
    </location>
</feature>
<feature type="modified residue" description="Phosphoserine" evidence="2">
    <location>
        <position position="185"/>
    </location>
</feature>
<feature type="modified residue" description="Phosphoserine" evidence="2">
    <location>
        <position position="194"/>
    </location>
</feature>
<feature type="modified residue" description="Phosphoserine" evidence="21">
    <location>
        <position position="203"/>
    </location>
</feature>
<feature type="modified residue" description="Phosphothreonine" evidence="20 21">
    <location>
        <position position="217"/>
    </location>
</feature>
<feature type="modified residue" description="Phosphoserine" evidence="2">
    <location>
        <position position="238"/>
    </location>
</feature>
<feature type="modified residue" description="Phosphoserine" evidence="2">
    <location>
        <position position="251"/>
    </location>
</feature>
<feature type="modified residue" description="Phosphoserine" evidence="2">
    <location>
        <position position="265"/>
    </location>
</feature>
<feature type="modified residue" description="Phosphoserine" evidence="2">
    <location>
        <position position="268"/>
    </location>
</feature>
<feature type="modified residue" description="Phosphoserine" evidence="2">
    <location>
        <position position="272"/>
    </location>
</feature>
<feature type="modified residue" description="Phosphothreonine" evidence="21">
    <location>
        <position position="292"/>
    </location>
</feature>
<feature type="modified residue" description="Phosphoserine" evidence="2">
    <location>
        <position position="311"/>
    </location>
</feature>
<feature type="modified residue" description="Phosphoserine" evidence="2">
    <location>
        <position position="329"/>
    </location>
</feature>
<feature type="modified residue" description="Phosphoserine" evidence="2">
    <location>
        <position position="332"/>
    </location>
</feature>
<feature type="modified residue" description="Phosphoserine" evidence="2">
    <location>
        <position position="347"/>
    </location>
</feature>
<feature type="modified residue" description="Phosphothreonine" evidence="2">
    <location>
        <position position="348"/>
    </location>
</feature>
<feature type="modified residue" description="Phosphothreonine" evidence="20">
    <location>
        <position position="365"/>
    </location>
</feature>
<feature type="modified residue" description="Phosphothreonine" evidence="2">
    <location>
        <position position="418"/>
    </location>
</feature>
<feature type="modified residue" description="Phosphothreonine" evidence="2">
    <location>
        <position position="586"/>
    </location>
</feature>
<feature type="modified residue" description="Phosphoserine" evidence="2">
    <location>
        <position position="588"/>
    </location>
</feature>
<feature type="modified residue" description="Phosphothreonine" evidence="2">
    <location>
        <position position="595"/>
    </location>
</feature>
<feature type="modified residue" description="Phosphoserine" evidence="2">
    <location>
        <position position="705"/>
    </location>
</feature>
<feature type="modified residue" description="Phosphoserine" evidence="2">
    <location>
        <position position="728"/>
    </location>
</feature>
<feature type="modified residue" description="Phosphoserine" evidence="2">
    <location>
        <position position="730"/>
    </location>
</feature>
<feature type="modified residue" description="Phosphoserine" evidence="2">
    <location>
        <position position="732"/>
    </location>
</feature>
<feature type="modified residue" description="Phosphoserine" evidence="19 21">
    <location>
        <position position="733"/>
    </location>
</feature>
<feature type="modified residue" description="Phosphoserine" evidence="2">
    <location>
        <position position="1188"/>
    </location>
</feature>
<feature type="modified residue" description="Phosphothreonine" evidence="2">
    <location>
        <position position="1264"/>
    </location>
</feature>
<feature type="splice variant" id="VSP_018225" description="In isoform 6." evidence="14">
    <location>
        <begin position="1"/>
        <end position="165"/>
    </location>
</feature>
<feature type="splice variant" id="VSP_018226" description="In isoform 3 and isoform 4." evidence="12 15">
    <location>
        <begin position="1"/>
        <end position="143"/>
    </location>
</feature>
<feature type="splice variant" id="VSP_018227" description="In isoform 3, isoform 4 and isoform 5." evidence="12 13 15">
    <original>RLEEREAELKKEYNALHQRHTEMIHNYMEHLERTKLHQLSGSDQLEATAHSRI</original>
    <variation>MNPGCMLLFVFGFVGGAVVINSAILVSLSVLLLVHFSISTGVPALTQNLPRIL</variation>
    <location>
        <begin position="144"/>
        <end position="196"/>
    </location>
</feature>
<feature type="splice variant" id="VSP_018228" description="In isoform 2, isoform 3, isoform 4, isoform 5 and isoform 6." evidence="11 12 13 14 15">
    <location>
        <begin position="248"/>
        <end position="261"/>
    </location>
</feature>
<feature type="splice variant" id="VSP_018229" description="In isoform 3." evidence="12">
    <original>G</original>
    <variation>GEYSG</variation>
    <location>
        <position position="405"/>
    </location>
</feature>
<feature type="splice variant" id="VSP_018230" description="In isoform 4." evidence="15">
    <original>T</original>
    <variation>TVILHQGRLLGLRA</variation>
    <location>
        <position position="1175"/>
    </location>
</feature>
<feature type="sequence conflict" description="In Ref. 1; AAN61564." evidence="17" ref="1">
    <original>R</original>
    <variation>C</variation>
    <location>
        <position position="241"/>
    </location>
</feature>
<feature type="sequence conflict" description="In Ref. 1; AAN61564." evidence="17" ref="1">
    <original>E</original>
    <variation>A</variation>
    <location>
        <position position="453"/>
    </location>
</feature>
<feature type="sequence conflict" description="In Ref. 5; BAE27980." evidence="17" ref="5">
    <original>E</original>
    <variation>G</variation>
    <location>
        <position position="468"/>
    </location>
</feature>
<feature type="sequence conflict" description="In Ref. 3; BAD93176." evidence="17" ref="3">
    <original>S</original>
    <variation>T</variation>
    <location>
        <position position="705"/>
    </location>
</feature>
<feature type="sequence conflict" description="In Ref. 5; BAE27907." evidence="17" ref="5">
    <original>L</original>
    <variation>P</variation>
    <location>
        <position position="1114"/>
    </location>
</feature>
<reference key="1">
    <citation type="journal article" date="2002" name="Proc. Natl. Acad. Sci. U.S.A.">
        <title>JLP: a scaffolding protein that tethers JNK/p38MAPK signaling modules and transcription factors.</title>
        <authorList>
            <person name="Lee C.M."/>
            <person name="Onesime D."/>
            <person name="Reddy C.D."/>
            <person name="Dhanasekaran N."/>
            <person name="Reddy E.P."/>
        </authorList>
    </citation>
    <scope>NUCLEOTIDE SEQUENCE [MRNA] (ISOFORM 2)</scope>
    <scope>FUNCTION</scope>
    <scope>INTERACTION WITH MAX; MAPK8; MAPK14; MAP3K3; MYC AND MAP2K4</scope>
    <scope>SUBCELLULAR LOCATION</scope>
</reference>
<reference key="2">
    <citation type="journal article" date="2005" name="Mol. Cell. Biol.">
        <title>Role of the JIP4 scaffold protein in the regulation of mitogen-activated protein kinase signaling pathways.</title>
        <authorList>
            <person name="Kelkar N."/>
            <person name="Standen C.L."/>
            <person name="Davis R.J."/>
        </authorList>
    </citation>
    <scope>NUCLEOTIDE SEQUENCE [MRNA] (ISOFORM 6)</scope>
    <scope>FUNCTION</scope>
    <scope>INTERACTION WITH KNS2 AND MAPK8</scope>
    <scope>SUBCELLULAR LOCATION</scope>
    <scope>TISSUE SPECIFICITY</scope>
    <scope>PHOSPHORYLATION</scope>
    <source>
        <strain>C57BL/6J</strain>
        <tissue>Testis</tissue>
    </source>
</reference>
<reference key="3">
    <citation type="submission" date="2000-08" db="EMBL/GenBank/DDBJ databases">
        <title>JSAP2, a novel member of the JSAP1 JNK scaffold protein family.</title>
        <authorList>
            <person name="Takamatsu N."/>
            <person name="Tochigi M."/>
            <person name="Ito M."/>
            <person name="Odama Y."/>
            <person name="Xu P."/>
            <person name="Nakabeppu Y."/>
            <person name="Yoshioka K."/>
            <person name="Shiba T."/>
        </authorList>
    </citation>
    <scope>NUCLEOTIDE SEQUENCE [MRNA] (ISOFORM 1)</scope>
    <source>
        <tissue>Testis</tissue>
    </source>
</reference>
<reference key="4">
    <citation type="journal article" date="2004" name="DNA Res.">
        <title>Prediction of the coding sequences of mouse homologues of KIAA gene: IV. The complete nucleotide sequences of 500 mouse KIAA-homologous cDNAs identified by screening of terminal sequences of cDNA clones randomly sampled from size-fractionated libraries.</title>
        <authorList>
            <person name="Okazaki N."/>
            <person name="Kikuno R."/>
            <person name="Ohara R."/>
            <person name="Inamoto S."/>
            <person name="Koseki H."/>
            <person name="Hiraoka S."/>
            <person name="Saga Y."/>
            <person name="Seino S."/>
            <person name="Nishimura M."/>
            <person name="Kaisho T."/>
            <person name="Hoshino K."/>
            <person name="Kitamura H."/>
            <person name="Nagase T."/>
            <person name="Ohara O."/>
            <person name="Koga H."/>
        </authorList>
    </citation>
    <scope>NUCLEOTIDE SEQUENCE [LARGE SCALE MRNA] (ISOFORM 3)</scope>
    <source>
        <tissue>Brain</tissue>
    </source>
</reference>
<reference key="5">
    <citation type="journal article" date="2005" name="Science">
        <title>The transcriptional landscape of the mammalian genome.</title>
        <authorList>
            <person name="Carninci P."/>
            <person name="Kasukawa T."/>
            <person name="Katayama S."/>
            <person name="Gough J."/>
            <person name="Frith M.C."/>
            <person name="Maeda N."/>
            <person name="Oyama R."/>
            <person name="Ravasi T."/>
            <person name="Lenhard B."/>
            <person name="Wells C."/>
            <person name="Kodzius R."/>
            <person name="Shimokawa K."/>
            <person name="Bajic V.B."/>
            <person name="Brenner S.E."/>
            <person name="Batalov S."/>
            <person name="Forrest A.R."/>
            <person name="Zavolan M."/>
            <person name="Davis M.J."/>
            <person name="Wilming L.G."/>
            <person name="Aidinis V."/>
            <person name="Allen J.E."/>
            <person name="Ambesi-Impiombato A."/>
            <person name="Apweiler R."/>
            <person name="Aturaliya R.N."/>
            <person name="Bailey T.L."/>
            <person name="Bansal M."/>
            <person name="Baxter L."/>
            <person name="Beisel K.W."/>
            <person name="Bersano T."/>
            <person name="Bono H."/>
            <person name="Chalk A.M."/>
            <person name="Chiu K.P."/>
            <person name="Choudhary V."/>
            <person name="Christoffels A."/>
            <person name="Clutterbuck D.R."/>
            <person name="Crowe M.L."/>
            <person name="Dalla E."/>
            <person name="Dalrymple B.P."/>
            <person name="de Bono B."/>
            <person name="Della Gatta G."/>
            <person name="di Bernardo D."/>
            <person name="Down T."/>
            <person name="Engstrom P."/>
            <person name="Fagiolini M."/>
            <person name="Faulkner G."/>
            <person name="Fletcher C.F."/>
            <person name="Fukushima T."/>
            <person name="Furuno M."/>
            <person name="Futaki S."/>
            <person name="Gariboldi M."/>
            <person name="Georgii-Hemming P."/>
            <person name="Gingeras T.R."/>
            <person name="Gojobori T."/>
            <person name="Green R.E."/>
            <person name="Gustincich S."/>
            <person name="Harbers M."/>
            <person name="Hayashi Y."/>
            <person name="Hensch T.K."/>
            <person name="Hirokawa N."/>
            <person name="Hill D."/>
            <person name="Huminiecki L."/>
            <person name="Iacono M."/>
            <person name="Ikeo K."/>
            <person name="Iwama A."/>
            <person name="Ishikawa T."/>
            <person name="Jakt M."/>
            <person name="Kanapin A."/>
            <person name="Katoh M."/>
            <person name="Kawasawa Y."/>
            <person name="Kelso J."/>
            <person name="Kitamura H."/>
            <person name="Kitano H."/>
            <person name="Kollias G."/>
            <person name="Krishnan S.P."/>
            <person name="Kruger A."/>
            <person name="Kummerfeld S.K."/>
            <person name="Kurochkin I.V."/>
            <person name="Lareau L.F."/>
            <person name="Lazarevic D."/>
            <person name="Lipovich L."/>
            <person name="Liu J."/>
            <person name="Liuni S."/>
            <person name="McWilliam S."/>
            <person name="Madan Babu M."/>
            <person name="Madera M."/>
            <person name="Marchionni L."/>
            <person name="Matsuda H."/>
            <person name="Matsuzawa S."/>
            <person name="Miki H."/>
            <person name="Mignone F."/>
            <person name="Miyake S."/>
            <person name="Morris K."/>
            <person name="Mottagui-Tabar S."/>
            <person name="Mulder N."/>
            <person name="Nakano N."/>
            <person name="Nakauchi H."/>
            <person name="Ng P."/>
            <person name="Nilsson R."/>
            <person name="Nishiguchi S."/>
            <person name="Nishikawa S."/>
            <person name="Nori F."/>
            <person name="Ohara O."/>
            <person name="Okazaki Y."/>
            <person name="Orlando V."/>
            <person name="Pang K.C."/>
            <person name="Pavan W.J."/>
            <person name="Pavesi G."/>
            <person name="Pesole G."/>
            <person name="Petrovsky N."/>
            <person name="Piazza S."/>
            <person name="Reed J."/>
            <person name="Reid J.F."/>
            <person name="Ring B.Z."/>
            <person name="Ringwald M."/>
            <person name="Rost B."/>
            <person name="Ruan Y."/>
            <person name="Salzberg S.L."/>
            <person name="Sandelin A."/>
            <person name="Schneider C."/>
            <person name="Schoenbach C."/>
            <person name="Sekiguchi K."/>
            <person name="Semple C.A."/>
            <person name="Seno S."/>
            <person name="Sessa L."/>
            <person name="Sheng Y."/>
            <person name="Shibata Y."/>
            <person name="Shimada H."/>
            <person name="Shimada K."/>
            <person name="Silva D."/>
            <person name="Sinclair B."/>
            <person name="Sperling S."/>
            <person name="Stupka E."/>
            <person name="Sugiura K."/>
            <person name="Sultana R."/>
            <person name="Takenaka Y."/>
            <person name="Taki K."/>
            <person name="Tammoja K."/>
            <person name="Tan S.L."/>
            <person name="Tang S."/>
            <person name="Taylor M.S."/>
            <person name="Tegner J."/>
            <person name="Teichmann S.A."/>
            <person name="Ueda H.R."/>
            <person name="van Nimwegen E."/>
            <person name="Verardo R."/>
            <person name="Wei C.L."/>
            <person name="Yagi K."/>
            <person name="Yamanishi H."/>
            <person name="Zabarovsky E."/>
            <person name="Zhu S."/>
            <person name="Zimmer A."/>
            <person name="Hide W."/>
            <person name="Bult C."/>
            <person name="Grimmond S.M."/>
            <person name="Teasdale R.D."/>
            <person name="Liu E.T."/>
            <person name="Brusic V."/>
            <person name="Quackenbush J."/>
            <person name="Wahlestedt C."/>
            <person name="Mattick J.S."/>
            <person name="Hume D.A."/>
            <person name="Kai C."/>
            <person name="Sasaki D."/>
            <person name="Tomaru Y."/>
            <person name="Fukuda S."/>
            <person name="Kanamori-Katayama M."/>
            <person name="Suzuki M."/>
            <person name="Aoki J."/>
            <person name="Arakawa T."/>
            <person name="Iida J."/>
            <person name="Imamura K."/>
            <person name="Itoh M."/>
            <person name="Kato T."/>
            <person name="Kawaji H."/>
            <person name="Kawagashira N."/>
            <person name="Kawashima T."/>
            <person name="Kojima M."/>
            <person name="Kondo S."/>
            <person name="Konno H."/>
            <person name="Nakano K."/>
            <person name="Ninomiya N."/>
            <person name="Nishio T."/>
            <person name="Okada M."/>
            <person name="Plessy C."/>
            <person name="Shibata K."/>
            <person name="Shiraki T."/>
            <person name="Suzuki S."/>
            <person name="Tagami M."/>
            <person name="Waki K."/>
            <person name="Watahiki A."/>
            <person name="Okamura-Oho Y."/>
            <person name="Suzuki H."/>
            <person name="Kawai J."/>
            <person name="Hayashizaki Y."/>
        </authorList>
    </citation>
    <scope>NUCLEOTIDE SEQUENCE [LARGE SCALE MRNA] (ISOFORM 4)</scope>
    <source>
        <strain>C57BL/6J</strain>
    </source>
</reference>
<reference key="6">
    <citation type="journal article" date="2009" name="PLoS Biol.">
        <title>Lineage-specific biology revealed by a finished genome assembly of the mouse.</title>
        <authorList>
            <person name="Church D.M."/>
            <person name="Goodstadt L."/>
            <person name="Hillier L.W."/>
            <person name="Zody M.C."/>
            <person name="Goldstein S."/>
            <person name="She X."/>
            <person name="Bult C.J."/>
            <person name="Agarwala R."/>
            <person name="Cherry J.L."/>
            <person name="DiCuccio M."/>
            <person name="Hlavina W."/>
            <person name="Kapustin Y."/>
            <person name="Meric P."/>
            <person name="Maglott D."/>
            <person name="Birtle Z."/>
            <person name="Marques A.C."/>
            <person name="Graves T."/>
            <person name="Zhou S."/>
            <person name="Teague B."/>
            <person name="Potamousis K."/>
            <person name="Churas C."/>
            <person name="Place M."/>
            <person name="Herschleb J."/>
            <person name="Runnheim R."/>
            <person name="Forrest D."/>
            <person name="Amos-Landgraf J."/>
            <person name="Schwartz D.C."/>
            <person name="Cheng Z."/>
            <person name="Lindblad-Toh K."/>
            <person name="Eichler E.E."/>
            <person name="Ponting C.P."/>
        </authorList>
    </citation>
    <scope>NUCLEOTIDE SEQUENCE [LARGE SCALE GENOMIC DNA]</scope>
    <scope>ALTERNATIVE SPLICING</scope>
    <source>
        <strain>C57BL/6J</strain>
    </source>
</reference>
<reference key="7">
    <citation type="journal article" date="2004" name="Genome Res.">
        <title>The status, quality, and expansion of the NIH full-length cDNA project: the Mammalian Gene Collection (MGC).</title>
        <authorList>
            <consortium name="The MGC Project Team"/>
        </authorList>
    </citation>
    <scope>NUCLEOTIDE SEQUENCE [LARGE SCALE MRNA] (ISOFORM 5)</scope>
    <source>
        <strain>C57BL/6J</strain>
        <tissue>Brain</tissue>
        <tissue>Olfactory epithelium</tissue>
    </source>
</reference>
<reference key="8">
    <citation type="journal article" date="2005" name="J. Biol. Chem.">
        <title>JLP associates with kinesin light chain 1 through a novel leucine zipper-like domain.</title>
        <authorList>
            <person name="Nguyen Q."/>
            <person name="Lee C.M."/>
            <person name="Le A."/>
            <person name="Reddy E.P."/>
        </authorList>
    </citation>
    <scope>INTERACTION WITH KNS2</scope>
    <scope>INDUCTION</scope>
</reference>
<reference key="9">
    <citation type="journal article" date="2007" name="Proc. Natl. Acad. Sci. U.S.A.">
        <title>Large-scale phosphorylation analysis of mouse liver.</title>
        <authorList>
            <person name="Villen J."/>
            <person name="Beausoleil S.A."/>
            <person name="Gerber S.A."/>
            <person name="Gygi S.P."/>
        </authorList>
    </citation>
    <scope>PHOSPHORYLATION [LARGE SCALE ANALYSIS] AT SER-733</scope>
    <scope>IDENTIFICATION BY MASS SPECTROMETRY [LARGE SCALE ANALYSIS]</scope>
    <source>
        <tissue>Liver</tissue>
    </source>
</reference>
<reference key="10">
    <citation type="journal article" date="2009" name="J. Biol. Chem.">
        <title>Kinesin adapter JLP links PIKfyve to microtubule-based endosome-to-trans-Golgi network traffic of furin.</title>
        <authorList>
            <person name="Ikonomov O.C."/>
            <person name="Fligger J."/>
            <person name="Sbrissa D."/>
            <person name="Dondapati R."/>
            <person name="Mlak K."/>
            <person name="Deeb R."/>
            <person name="Shisheva A."/>
        </authorList>
    </citation>
    <scope>FUNCTION</scope>
    <scope>INTERACTION WITH PIKFYVE</scope>
    <scope>SUBCELLULAR LOCATION</scope>
</reference>
<reference key="11">
    <citation type="journal article" date="2009" name="Mol. Cell. Proteomics">
        <title>Large scale localization of protein phosphorylation by use of electron capture dissociation mass spectrometry.</title>
        <authorList>
            <person name="Sweet S.M."/>
            <person name="Bailey C.M."/>
            <person name="Cunningham D.L."/>
            <person name="Heath J.K."/>
            <person name="Cooper H.J."/>
        </authorList>
    </citation>
    <scope>PHOSPHORYLATION [LARGE SCALE ANALYSIS] AT THR-217 AND THR-365</scope>
    <scope>IDENTIFICATION BY MASS SPECTROMETRY [LARGE SCALE ANALYSIS]</scope>
    <source>
        <tissue>Embryonic fibroblast</tissue>
    </source>
</reference>
<reference key="12">
    <citation type="journal article" date="2010" name="Cell">
        <title>A tissue-specific atlas of mouse protein phosphorylation and expression.</title>
        <authorList>
            <person name="Huttlin E.L."/>
            <person name="Jedrychowski M.P."/>
            <person name="Elias J.E."/>
            <person name="Goswami T."/>
            <person name="Rad R."/>
            <person name="Beausoleil S.A."/>
            <person name="Villen J."/>
            <person name="Haas W."/>
            <person name="Sowa M.E."/>
            <person name="Gygi S.P."/>
        </authorList>
    </citation>
    <scope>PHOSPHORYLATION [LARGE SCALE ANALYSIS] AT SER-203; THR-217; THR-292 AND SER-733</scope>
    <scope>IDENTIFICATION BY MASS SPECTROMETRY [LARGE SCALE ANALYSIS]</scope>
    <source>
        <tissue>Brain</tissue>
        <tissue>Brown adipose tissue</tissue>
        <tissue>Heart</tissue>
        <tissue>Kidney</tissue>
        <tissue>Liver</tissue>
        <tissue>Lung</tissue>
        <tissue>Pancreas</tissue>
        <tissue>Spleen</tissue>
        <tissue>Testis</tissue>
    </source>
</reference>
<dbReference type="EMBL" id="AF327451">
    <property type="protein sequence ID" value="AAN61564.1"/>
    <property type="molecule type" value="mRNA"/>
</dbReference>
<dbReference type="EMBL" id="AY823270">
    <property type="protein sequence ID" value="AAX19462.1"/>
    <property type="molecule type" value="mRNA"/>
</dbReference>
<dbReference type="EMBL" id="AB047782">
    <property type="protein sequence ID" value="BAD93176.1"/>
    <property type="molecule type" value="mRNA"/>
</dbReference>
<dbReference type="EMBL" id="AK172961">
    <property type="protein sequence ID" value="BAD32239.1"/>
    <property type="status" value="ALT_INIT"/>
    <property type="molecule type" value="mRNA"/>
</dbReference>
<dbReference type="EMBL" id="AK147431">
    <property type="protein sequence ID" value="BAE27907.1"/>
    <property type="molecule type" value="mRNA"/>
</dbReference>
<dbReference type="EMBL" id="AK147537">
    <property type="protein sequence ID" value="BAE27980.1"/>
    <property type="molecule type" value="mRNA"/>
</dbReference>
<dbReference type="EMBL" id="AL662838">
    <property type="protein sequence ID" value="CAI35367.1"/>
    <property type="molecule type" value="Genomic_DNA"/>
</dbReference>
<dbReference type="EMBL" id="AL662838">
    <property type="protein sequence ID" value="CAI35375.1"/>
    <property type="molecule type" value="Genomic_DNA"/>
</dbReference>
<dbReference type="EMBL" id="AL662838">
    <property type="protein sequence ID" value="CAI35376.1"/>
    <property type="status" value="ALT_SEQ"/>
    <property type="molecule type" value="Genomic_DNA"/>
</dbReference>
<dbReference type="EMBL" id="BC060100">
    <property type="protein sequence ID" value="AAH60100.1"/>
    <property type="molecule type" value="mRNA"/>
</dbReference>
<dbReference type="EMBL" id="BC094670">
    <property type="protein sequence ID" value="AAH94670.1"/>
    <property type="molecule type" value="mRNA"/>
</dbReference>
<dbReference type="CCDS" id="CCDS25248.1">
    <molecule id="Q58A65-2"/>
</dbReference>
<dbReference type="CCDS" id="CCDS56797.1">
    <molecule id="Q58A65-3"/>
</dbReference>
<dbReference type="RefSeq" id="NP_001020599.1">
    <property type="nucleotide sequence ID" value="NM_001025428.1"/>
</dbReference>
<dbReference type="RefSeq" id="NP_001020600.1">
    <molecule id="Q58A65-3"/>
    <property type="nucleotide sequence ID" value="NM_001025429.2"/>
</dbReference>
<dbReference type="RefSeq" id="NP_001020601.1">
    <property type="nucleotide sequence ID" value="NM_001025430.1"/>
</dbReference>
<dbReference type="RefSeq" id="NP_001186132.1">
    <property type="nucleotide sequence ID" value="NM_001199203.1"/>
</dbReference>
<dbReference type="RefSeq" id="NP_001186133.1">
    <property type="nucleotide sequence ID" value="NM_001199204.1"/>
</dbReference>
<dbReference type="RefSeq" id="NP_001186134.1">
    <molecule id="Q58A65-4"/>
    <property type="nucleotide sequence ID" value="NM_001199205.2"/>
</dbReference>
<dbReference type="RefSeq" id="NP_081845.2">
    <molecule id="Q58A65-2"/>
    <property type="nucleotide sequence ID" value="NM_027569.3"/>
</dbReference>
<dbReference type="RefSeq" id="XP_006534282.1">
    <property type="nucleotide sequence ID" value="XM_006534219.2"/>
</dbReference>
<dbReference type="RefSeq" id="XP_030102178.1">
    <molecule id="Q58A65-6"/>
    <property type="nucleotide sequence ID" value="XM_030246318.2"/>
</dbReference>
<dbReference type="SMR" id="Q58A65"/>
<dbReference type="BioGRID" id="214283">
    <property type="interactions" value="18"/>
</dbReference>
<dbReference type="FunCoup" id="Q58A65">
    <property type="interactions" value="3988"/>
</dbReference>
<dbReference type="IntAct" id="Q58A65">
    <property type="interactions" value="2"/>
</dbReference>
<dbReference type="MINT" id="Q58A65"/>
<dbReference type="STRING" id="10090.ENSMUSP00000042271"/>
<dbReference type="GlyGen" id="Q58A65">
    <property type="glycosylation" value="2 sites, 1 O-linked glycan (1 site)"/>
</dbReference>
<dbReference type="iPTMnet" id="Q58A65"/>
<dbReference type="PhosphoSitePlus" id="Q58A65"/>
<dbReference type="SwissPalm" id="Q58A65"/>
<dbReference type="jPOST" id="Q58A65"/>
<dbReference type="PaxDb" id="10090-ENSMUSP00000042271"/>
<dbReference type="PeptideAtlas" id="Q58A65"/>
<dbReference type="ProteomicsDB" id="268911">
    <molecule id="Q58A65-1"/>
</dbReference>
<dbReference type="ProteomicsDB" id="268912">
    <molecule id="Q58A65-2"/>
</dbReference>
<dbReference type="ProteomicsDB" id="268913">
    <molecule id="Q58A65-3"/>
</dbReference>
<dbReference type="ProteomicsDB" id="268914">
    <molecule id="Q58A65-4"/>
</dbReference>
<dbReference type="ProteomicsDB" id="268915">
    <molecule id="Q58A65-5"/>
</dbReference>
<dbReference type="ProteomicsDB" id="268916">
    <molecule id="Q58A65-6"/>
</dbReference>
<dbReference type="Pumba" id="Q58A65"/>
<dbReference type="Antibodypedia" id="30731">
    <property type="antibodies" value="211 antibodies from 37 providers"/>
</dbReference>
<dbReference type="DNASU" id="70834"/>
<dbReference type="Ensembl" id="ENSMUST00000041956.14">
    <molecule id="Q58A65-2"/>
    <property type="protein sequence ID" value="ENSMUSP00000042271.8"/>
    <property type="gene ID" value="ENSMUSG00000020859.18"/>
</dbReference>
<dbReference type="Ensembl" id="ENSMUST00000075695.13">
    <molecule id="Q58A65-3"/>
    <property type="protein sequence ID" value="ENSMUSP00000075115.7"/>
    <property type="gene ID" value="ENSMUSG00000020859.18"/>
</dbReference>
<dbReference type="GeneID" id="70834"/>
<dbReference type="KEGG" id="mmu:70834"/>
<dbReference type="UCSC" id="uc007kxx.1">
    <molecule id="Q58A65-2"/>
    <property type="organism name" value="mouse"/>
</dbReference>
<dbReference type="UCSC" id="uc007kxy.1">
    <molecule id="Q58A65-1"/>
    <property type="organism name" value="mouse"/>
</dbReference>
<dbReference type="UCSC" id="uc007kxz.1">
    <molecule id="Q58A65-6"/>
    <property type="organism name" value="mouse"/>
</dbReference>
<dbReference type="UCSC" id="uc007kya.1">
    <molecule id="Q58A65-3"/>
    <property type="organism name" value="mouse"/>
</dbReference>
<dbReference type="UCSC" id="uc007kyc.1">
    <molecule id="Q58A65-5"/>
    <property type="organism name" value="mouse"/>
</dbReference>
<dbReference type="UCSC" id="uc007kyd.1">
    <molecule id="Q58A65-4"/>
    <property type="organism name" value="mouse"/>
</dbReference>
<dbReference type="AGR" id="MGI:1918084"/>
<dbReference type="CTD" id="9043"/>
<dbReference type="MGI" id="MGI:1918084">
    <property type="gene designation" value="Spag9"/>
</dbReference>
<dbReference type="VEuPathDB" id="HostDB:ENSMUSG00000020859"/>
<dbReference type="eggNOG" id="KOG2077">
    <property type="taxonomic scope" value="Eukaryota"/>
</dbReference>
<dbReference type="GeneTree" id="ENSGT00940000153496"/>
<dbReference type="InParanoid" id="Q58A65"/>
<dbReference type="OMA" id="DXASREN"/>
<dbReference type="OrthoDB" id="10256043at2759"/>
<dbReference type="PhylomeDB" id="Q58A65"/>
<dbReference type="TreeFam" id="TF313096"/>
<dbReference type="Reactome" id="R-MMU-525793">
    <property type="pathway name" value="Myogenesis"/>
</dbReference>
<dbReference type="BioGRID-ORCS" id="70834">
    <property type="hits" value="2 hits in 77 CRISPR screens"/>
</dbReference>
<dbReference type="ChiTaRS" id="Spag9">
    <property type="organism name" value="mouse"/>
</dbReference>
<dbReference type="PRO" id="PR:Q58A65"/>
<dbReference type="Proteomes" id="UP000000589">
    <property type="component" value="Chromosome 11"/>
</dbReference>
<dbReference type="RNAct" id="Q58A65">
    <property type="molecule type" value="protein"/>
</dbReference>
<dbReference type="Bgee" id="ENSMUSG00000020859">
    <property type="expression patterns" value="Expressed in otolith organ and 232 other cell types or tissues"/>
</dbReference>
<dbReference type="ExpressionAtlas" id="Q58A65">
    <property type="expression patterns" value="baseline and differential"/>
</dbReference>
<dbReference type="GO" id="GO:0034451">
    <property type="term" value="C:centriolar satellite"/>
    <property type="evidence" value="ECO:0007669"/>
    <property type="project" value="Ensembl"/>
</dbReference>
<dbReference type="GO" id="GO:0005737">
    <property type="term" value="C:cytoplasm"/>
    <property type="evidence" value="ECO:0000314"/>
    <property type="project" value="MGI"/>
</dbReference>
<dbReference type="GO" id="GO:0005829">
    <property type="term" value="C:cytosol"/>
    <property type="evidence" value="ECO:0000304"/>
    <property type="project" value="Reactome"/>
</dbReference>
<dbReference type="GO" id="GO:0005765">
    <property type="term" value="C:lysosomal membrane"/>
    <property type="evidence" value="ECO:0000250"/>
    <property type="project" value="UniProtKB"/>
</dbReference>
<dbReference type="GO" id="GO:0048471">
    <property type="term" value="C:perinuclear region of cytoplasm"/>
    <property type="evidence" value="ECO:0000314"/>
    <property type="project" value="MGI"/>
</dbReference>
<dbReference type="GO" id="GO:0042802">
    <property type="term" value="F:identical protein binding"/>
    <property type="evidence" value="ECO:0000353"/>
    <property type="project" value="MGI"/>
</dbReference>
<dbReference type="GO" id="GO:0008432">
    <property type="term" value="F:JUN kinase binding"/>
    <property type="evidence" value="ECO:0000314"/>
    <property type="project" value="MGI"/>
</dbReference>
<dbReference type="GO" id="GO:0019894">
    <property type="term" value="F:kinesin binding"/>
    <property type="evidence" value="ECO:0000314"/>
    <property type="project" value="MGI"/>
</dbReference>
<dbReference type="GO" id="GO:0005078">
    <property type="term" value="F:MAP-kinase scaffold activity"/>
    <property type="evidence" value="ECO:0000314"/>
    <property type="project" value="MGI"/>
</dbReference>
<dbReference type="GO" id="GO:0048273">
    <property type="term" value="F:mitogen-activated protein kinase p38 binding"/>
    <property type="evidence" value="ECO:0000314"/>
    <property type="project" value="MGI"/>
</dbReference>
<dbReference type="GO" id="GO:0007254">
    <property type="term" value="P:JNK cascade"/>
    <property type="evidence" value="ECO:0000314"/>
    <property type="project" value="MGI"/>
</dbReference>
<dbReference type="GO" id="GO:0032418">
    <property type="term" value="P:lysosome localization"/>
    <property type="evidence" value="ECO:0000250"/>
    <property type="project" value="UniProtKB"/>
</dbReference>
<dbReference type="GO" id="GO:1903860">
    <property type="term" value="P:negative regulation of dendrite extension"/>
    <property type="evidence" value="ECO:0007669"/>
    <property type="project" value="Ensembl"/>
</dbReference>
<dbReference type="GO" id="GO:0045665">
    <property type="term" value="P:negative regulation of neuron differentiation"/>
    <property type="evidence" value="ECO:0007669"/>
    <property type="project" value="Ensembl"/>
</dbReference>
<dbReference type="GO" id="GO:0030335">
    <property type="term" value="P:positive regulation of cell migration"/>
    <property type="evidence" value="ECO:0007669"/>
    <property type="project" value="Ensembl"/>
</dbReference>
<dbReference type="GO" id="GO:0043410">
    <property type="term" value="P:positive regulation of MAPK cascade"/>
    <property type="evidence" value="ECO:0000314"/>
    <property type="project" value="MGI"/>
</dbReference>
<dbReference type="GO" id="GO:0045666">
    <property type="term" value="P:positive regulation of neuron differentiation"/>
    <property type="evidence" value="ECO:0000315"/>
    <property type="project" value="MGI"/>
</dbReference>
<dbReference type="GO" id="GO:0042147">
    <property type="term" value="P:retrograde transport, endosome to Golgi"/>
    <property type="evidence" value="ECO:0000266"/>
    <property type="project" value="MGI"/>
</dbReference>
<dbReference type="GO" id="GO:0051146">
    <property type="term" value="P:striated muscle cell differentiation"/>
    <property type="evidence" value="ECO:0000316"/>
    <property type="project" value="MGI"/>
</dbReference>
<dbReference type="FunFam" id="1.20.58.1770:FF:000001">
    <property type="entry name" value="C-Jun-amino-terminal kinase-interacting protein 3 isoform X1"/>
    <property type="match status" value="1"/>
</dbReference>
<dbReference type="FunFam" id="1.20.5.1000:FF:000001">
    <property type="entry name" value="C-Jun-amino-terminal kinase-interacting protein 3 isoform X2"/>
    <property type="match status" value="1"/>
</dbReference>
<dbReference type="FunFam" id="2.130.10.10:FF:000700">
    <property type="entry name" value="Sperm-associated antigen 9a"/>
    <property type="match status" value="1"/>
</dbReference>
<dbReference type="Gene3D" id="1.20.58.1770">
    <property type="match status" value="1"/>
</dbReference>
<dbReference type="Gene3D" id="1.20.5.1000">
    <property type="entry name" value="arf6 gtpase in complex with a specific effector, jip4"/>
    <property type="match status" value="1"/>
</dbReference>
<dbReference type="Gene3D" id="2.130.10.10">
    <property type="entry name" value="YVTN repeat-like/Quinoprotein amine dehydrogenase"/>
    <property type="match status" value="1"/>
</dbReference>
<dbReference type="InterPro" id="IPR039911">
    <property type="entry name" value="JIP3/JIP4"/>
</dbReference>
<dbReference type="InterPro" id="IPR032486">
    <property type="entry name" value="JIP_LZII"/>
</dbReference>
<dbReference type="InterPro" id="IPR034743">
    <property type="entry name" value="RH1"/>
</dbReference>
<dbReference type="InterPro" id="IPR034744">
    <property type="entry name" value="RH2"/>
</dbReference>
<dbReference type="InterPro" id="IPR015943">
    <property type="entry name" value="WD40/YVTN_repeat-like_dom_sf"/>
</dbReference>
<dbReference type="InterPro" id="IPR036322">
    <property type="entry name" value="WD40_repeat_dom_sf"/>
</dbReference>
<dbReference type="PANTHER" id="PTHR13886:SF2">
    <property type="entry name" value="C-JUN-AMINO-TERMINAL KINASE-INTERACTING PROTEIN 4"/>
    <property type="match status" value="1"/>
</dbReference>
<dbReference type="PANTHER" id="PTHR13886">
    <property type="entry name" value="JNK/SAPK-ASSOCIATED PROTEIN"/>
    <property type="match status" value="1"/>
</dbReference>
<dbReference type="Pfam" id="PF16471">
    <property type="entry name" value="JIP_LZII"/>
    <property type="match status" value="1"/>
</dbReference>
<dbReference type="Pfam" id="PF09744">
    <property type="entry name" value="RH1"/>
    <property type="match status" value="1"/>
</dbReference>
<dbReference type="Pfam" id="PF19056">
    <property type="entry name" value="WD40_2"/>
    <property type="match status" value="1"/>
</dbReference>
<dbReference type="SUPFAM" id="SSF50978">
    <property type="entry name" value="WD40 repeat-like"/>
    <property type="match status" value="1"/>
</dbReference>
<dbReference type="PROSITE" id="PS51776">
    <property type="entry name" value="RH1"/>
    <property type="match status" value="1"/>
</dbReference>
<dbReference type="PROSITE" id="PS51777">
    <property type="entry name" value="RH2"/>
    <property type="match status" value="1"/>
</dbReference>
<comment type="function">
    <text evidence="2 7 8 10">The JNK-interacting protein (JIP) group of scaffold proteins selectively mediates JNK signaling by aggregating specific components of the MAPK cascade to form a functional JNK signaling module (PubMed:12391307, PubMed:15767678). Regulates lysosomal positioning by acting as an adapter protein which links PIP4P1-positive lysosomes to the dynein-dynactin complex (By similarity). Assists PIKFYVE selective functionality in microtubule-based endosome-to-TGN trafficking (PubMed:19056739).</text>
</comment>
<comment type="subunit">
    <text evidence="2 7 8 9 10">Homodimer (By similarity). The homodimer interacts with ARF6, forming a heterotetramer (By similarity). Homooligomer (By similarity). Interacts with MAX, MAPK8, MAPK14, MAP3K3, MYC, and MAP2K4 (PubMed:12391307). Interacts with KNS2 (PubMed:15987681). Interaction with KNS2 is important in the formation of ternary complex with MAPK8 (PubMed:15767678). Interacts with PIP4P1 (By similarity). Interacts with PIKFYVE (PubMed:19056739).</text>
</comment>
<comment type="interaction">
    <interactant intactId="EBI-6530207">
        <id>Q58A65</id>
    </interactant>
    <interactant intactId="EBI-988682">
        <id>P62331</id>
        <label>Arf6</label>
    </interactant>
    <organismsDiffer>false</organismsDiffer>
    <experiments>10</experiments>
</comment>
<comment type="interaction">
    <interactant intactId="EBI-6530207">
        <id>Q58A65</id>
    </interactant>
    <interactant intactId="EBI-5323863">
        <id>Q5S007</id>
        <label>LRRK2</label>
    </interactant>
    <organismsDiffer>true</organismsDiffer>
    <experiments>2</experiments>
</comment>
<comment type="subcellular location">
    <subcellularLocation>
        <location evidence="7 8 10">Cytoplasm</location>
    </subcellularLocation>
    <subcellularLocation>
        <location evidence="7 10">Cytoplasm</location>
        <location evidence="7 10">Perinuclear region</location>
    </subcellularLocation>
    <subcellularLocation>
        <location evidence="2">Lysosome membrane</location>
    </subcellularLocation>
    <text evidence="7">Perinuclear distribution in response to stress signals such as UV radiation.</text>
</comment>
<comment type="alternative products">
    <event type="alternative splicing"/>
    <isoform>
        <id>Q58A65-1</id>
        <name>1</name>
        <name evidence="16">JLP(L)</name>
        <sequence type="displayed"/>
    </isoform>
    <isoform>
        <id>Q58A65-2</id>
        <name>2</name>
        <sequence type="described" ref="VSP_018228"/>
    </isoform>
    <isoform>
        <id>Q58A65-3</id>
        <name>3</name>
        <sequence type="described" ref="VSP_018226 VSP_018227 VSP_018228 VSP_018229"/>
    </isoform>
    <isoform>
        <id>Q58A65-4</id>
        <name>4</name>
        <sequence type="described" ref="VSP_018226 VSP_018227 VSP_018228 VSP_018230"/>
    </isoform>
    <isoform>
        <id>Q58A65-5</id>
        <name>5</name>
        <sequence type="described" ref="VSP_018227 VSP_018228"/>
    </isoform>
    <isoform>
        <id>Q58A65-6</id>
        <name>6</name>
        <sequence type="described" ref="VSP_018225 VSP_018228"/>
    </isoform>
</comment>
<comment type="tissue specificity">
    <molecule>Isoform 6</molecule>
    <text evidence="8">Highly expressed in brain, kidney, liver, heart.</text>
</comment>
<comment type="induction">
    <text evidence="9">Up-regulated during neuronal differentiation.</text>
</comment>
<comment type="PTM">
    <text evidence="8">Phosphorylated by MAPK8 and MAPK14.</text>
</comment>
<comment type="similarity">
    <text evidence="17">Belongs to the JIP scaffold family.</text>
</comment>
<comment type="sequence caution" evidence="17">
    <conflict type="erroneous initiation">
        <sequence resource="EMBL-CDS" id="BAD32239"/>
    </conflict>
    <text>Extended N-terminus.</text>
</comment>
<comment type="sequence caution" evidence="17">
    <conflict type="erroneous gene model prediction">
        <sequence resource="EMBL-CDS" id="CAI35376"/>
    </conflict>
</comment>
<name>JIP4_MOUSE</name>
<sequence>MELEDGVVYQEEPGGSGAVMSERVSGLAGSIYREFERLIGRYDEEVVKELMPLVVAVLENLDSVFAQDQEHQVELELLRDDNEQLITQYEREKALRKHAEEKFIEFEDSQEQEKKDLQTRVESLESQTRQLELKAKNYADQISRLEEREAELKKEYNALHQRHTEMIHNYMEHLERTKLHQLSGSDQLEATAHSRIRKERPISLGIFPLPAGDGLLTPDTQKGGETPGSEQWKFQELSQPRSHTSLKVSHSPEPPKAVEQEDELSDISQGGSKATTPASTANSDVSAIPPDTPSKEDNEGFVKGTDTSNKSEISKHIEVQVAQETRNVSTESGENEEKSEVQAIIESTPELDMDKDLSGYKGSSTPTKGIENKAFDRNTESLFEELSSAGSGLIGDVDEGADLLGMGREVENLILENTQLLETKNALNVVKNDLIAKVDELTCEKDVLQGELEAVKQAKLKLEDKNRELEEELRKARAEAEDARQKAKDDDDSDIPTAQRKRFTRVEMARVLMERNQYKERLMELQEAVRWTEMIRASRENPAMQEKKRSSIWQFFSRLFSSSSNATKKPEPPVNLKYNAPTSHVTPSVKKRSSTLSQLPGDKSKAFDFLSEETEASLASRREQKREQYRQVKAHVQKEDGRVQAFGWSLPQKYKQVANGQGETKMKNLPVPVYLRPLDEKDASMKLWCAVGVNLSGGKTRDGGSVVGASVFYKDIAGLDTEGSKQRSASQSSLDKLDQELKEQQKEFKNQEELSSQVWICTSTHSTTKVIIIDAVQPGNILDSFTVCNSHVLCIASVPGARETDYPAGEELSESGQVDKASLCGSMTSNSSAEMDSLLGGITVVGCSTEGLTGAATSPSTNGASPVIEKPPEMETENSEVDENIPTAEEATEATEGNAGSTEDTVDISQPGVYTEHVFTDPLGVQIPEDLSPVFQSSNDSDVYKDQISVLPNEQDLAREEAQKMSSLLPTMWLGAQNGCLYVHSSVAQWRKCLHSIKLKDSILSIVHVKGIVLVALADGTLAIFHRGVDGQWDLSNYHLLDLGRPHHSIRCMTVVHDKVWCGYRNKIYVVQPKAMKIEKSFDAHPRKESQVRQLAWVGDGVWVSIRLDSTLRLYHAHTYQHLQDVDIEPYVSKMLGTGKLGFSFVRITALMVSCNRLWVGTGNGVIISIPLTETNKTSGTPGNRPGSVIRVYGDENSDKVTPGTFIPYCSMAHAQLCFHGHRDAVKFFVAVPGQVISPQSSSGGADLTADKAGSSAQEPSSQTPLKSMLVISGGEGYIDFRMGDEGGESELLGEDLPLEPSVTKAERSHLIVWQVMCGNE</sequence>
<proteinExistence type="evidence at protein level"/>
<organism>
    <name type="scientific">Mus musculus</name>
    <name type="common">Mouse</name>
    <dbReference type="NCBI Taxonomy" id="10090"/>
    <lineage>
        <taxon>Eukaryota</taxon>
        <taxon>Metazoa</taxon>
        <taxon>Chordata</taxon>
        <taxon>Craniata</taxon>
        <taxon>Vertebrata</taxon>
        <taxon>Euteleostomi</taxon>
        <taxon>Mammalia</taxon>
        <taxon>Eutheria</taxon>
        <taxon>Euarchontoglires</taxon>
        <taxon>Glires</taxon>
        <taxon>Rodentia</taxon>
        <taxon>Myomorpha</taxon>
        <taxon>Muroidea</taxon>
        <taxon>Muridae</taxon>
        <taxon>Murinae</taxon>
        <taxon>Mus</taxon>
        <taxon>Mus</taxon>
    </lineage>
</organism>
<accession>Q58A65</accession>
<accession>Q3UH77</accession>
<accession>Q3UHF0</accession>
<accession>Q58VQ4</accession>
<accession>Q5NC70</accession>
<accession>Q5NC78</accession>
<accession>Q6A057</accession>
<accession>Q6PAS3</accession>
<accession>Q8CJC2</accession>
<evidence type="ECO:0000250" key="1"/>
<evidence type="ECO:0000250" key="2">
    <source>
        <dbReference type="UniProtKB" id="O60271"/>
    </source>
</evidence>
<evidence type="ECO:0000255" key="3"/>
<evidence type="ECO:0000255" key="4">
    <source>
        <dbReference type="PROSITE-ProRule" id="PRU01112"/>
    </source>
</evidence>
<evidence type="ECO:0000255" key="5">
    <source>
        <dbReference type="PROSITE-ProRule" id="PRU01113"/>
    </source>
</evidence>
<evidence type="ECO:0000256" key="6">
    <source>
        <dbReference type="SAM" id="MobiDB-lite"/>
    </source>
</evidence>
<evidence type="ECO:0000269" key="7">
    <source>
    </source>
</evidence>
<evidence type="ECO:0000269" key="8">
    <source>
    </source>
</evidence>
<evidence type="ECO:0000269" key="9">
    <source>
    </source>
</evidence>
<evidence type="ECO:0000269" key="10">
    <source>
    </source>
</evidence>
<evidence type="ECO:0000303" key="11">
    <source>
    </source>
</evidence>
<evidence type="ECO:0000303" key="12">
    <source>
    </source>
</evidence>
<evidence type="ECO:0000303" key="13">
    <source>
    </source>
</evidence>
<evidence type="ECO:0000303" key="14">
    <source>
    </source>
</evidence>
<evidence type="ECO:0000303" key="15">
    <source>
    </source>
</evidence>
<evidence type="ECO:0000303" key="16">
    <source>
    </source>
</evidence>
<evidence type="ECO:0000305" key="17"/>
<evidence type="ECO:0000312" key="18">
    <source>
        <dbReference type="MGI" id="MGI:1918084"/>
    </source>
</evidence>
<evidence type="ECO:0007744" key="19">
    <source>
    </source>
</evidence>
<evidence type="ECO:0007744" key="20">
    <source>
    </source>
</evidence>
<evidence type="ECO:0007744" key="21">
    <source>
    </source>
</evidence>
<keyword id="KW-0007">Acetylation</keyword>
<keyword id="KW-0025">Alternative splicing</keyword>
<keyword id="KW-0175">Coiled coil</keyword>
<keyword id="KW-0963">Cytoplasm</keyword>
<keyword id="KW-0458">Lysosome</keyword>
<keyword id="KW-0472">Membrane</keyword>
<keyword id="KW-0597">Phosphoprotein</keyword>
<keyword id="KW-1185">Reference proteome</keyword>